<name>HLX_BOVIN</name>
<feature type="chain" id="PRO_0000311699" description="H2.0-like homeobox protein">
    <location>
        <begin position="1"/>
        <end position="486"/>
    </location>
</feature>
<feature type="DNA-binding region" description="Homeobox" evidence="4">
    <location>
        <begin position="276"/>
        <end position="335"/>
    </location>
</feature>
<feature type="region of interest" description="Disordered" evidence="5">
    <location>
        <begin position="83"/>
        <end position="173"/>
    </location>
</feature>
<feature type="region of interest" description="Disordered" evidence="5">
    <location>
        <begin position="330"/>
        <end position="486"/>
    </location>
</feature>
<feature type="compositionally biased region" description="Low complexity" evidence="5">
    <location>
        <begin position="125"/>
        <end position="135"/>
    </location>
</feature>
<feature type="compositionally biased region" description="Basic and acidic residues" evidence="5">
    <location>
        <begin position="334"/>
        <end position="349"/>
    </location>
</feature>
<feature type="compositionally biased region" description="Basic and acidic residues" evidence="5">
    <location>
        <begin position="363"/>
        <end position="372"/>
    </location>
</feature>
<feature type="compositionally biased region" description="Acidic residues" evidence="5">
    <location>
        <begin position="373"/>
        <end position="383"/>
    </location>
</feature>
<feature type="compositionally biased region" description="Basic and acidic residues" evidence="5">
    <location>
        <begin position="390"/>
        <end position="401"/>
    </location>
</feature>
<feature type="compositionally biased region" description="Low complexity" evidence="5">
    <location>
        <begin position="409"/>
        <end position="420"/>
    </location>
</feature>
<feature type="compositionally biased region" description="Gly residues" evidence="5">
    <location>
        <begin position="421"/>
        <end position="440"/>
    </location>
</feature>
<feature type="compositionally biased region" description="Low complexity" evidence="5">
    <location>
        <begin position="441"/>
        <end position="474"/>
    </location>
</feature>
<feature type="compositionally biased region" description="Pro residues" evidence="5">
    <location>
        <begin position="475"/>
        <end position="486"/>
    </location>
</feature>
<comment type="function">
    <text evidence="2">Transcription factor required for TBX21/T-bet-dependent maturation of Th1 cells as well as maintenance of Th1-specific gene expression. Involved in embryogenesis and hematopoiesis (By similarity).</text>
</comment>
<comment type="subcellular location">
    <subcellularLocation>
        <location evidence="1 4">Nucleus</location>
    </subcellularLocation>
</comment>
<comment type="similarity">
    <text evidence="3">Belongs to the H2.0 homeobox family.</text>
</comment>
<evidence type="ECO:0000250" key="1">
    <source>
        <dbReference type="UniProtKB" id="P52950"/>
    </source>
</evidence>
<evidence type="ECO:0000250" key="2">
    <source>
        <dbReference type="UniProtKB" id="Q61670"/>
    </source>
</evidence>
<evidence type="ECO:0000255" key="3"/>
<evidence type="ECO:0000255" key="4">
    <source>
        <dbReference type="PROSITE-ProRule" id="PRU00108"/>
    </source>
</evidence>
<evidence type="ECO:0000256" key="5">
    <source>
        <dbReference type="SAM" id="MobiDB-lite"/>
    </source>
</evidence>
<evidence type="ECO:0000312" key="6">
    <source>
        <dbReference type="EMBL" id="AAI51346.1"/>
    </source>
</evidence>
<proteinExistence type="evidence at transcript level"/>
<organism>
    <name type="scientific">Bos taurus</name>
    <name type="common">Bovine</name>
    <dbReference type="NCBI Taxonomy" id="9913"/>
    <lineage>
        <taxon>Eukaryota</taxon>
        <taxon>Metazoa</taxon>
        <taxon>Chordata</taxon>
        <taxon>Craniata</taxon>
        <taxon>Vertebrata</taxon>
        <taxon>Euteleostomi</taxon>
        <taxon>Mammalia</taxon>
        <taxon>Eutheria</taxon>
        <taxon>Laurasiatheria</taxon>
        <taxon>Artiodactyla</taxon>
        <taxon>Ruminantia</taxon>
        <taxon>Pecora</taxon>
        <taxon>Bovidae</taxon>
        <taxon>Bovinae</taxon>
        <taxon>Bos</taxon>
    </lineage>
</organism>
<keyword id="KW-0221">Differentiation</keyword>
<keyword id="KW-0238">DNA-binding</keyword>
<keyword id="KW-0371">Homeobox</keyword>
<keyword id="KW-0539">Nucleus</keyword>
<keyword id="KW-1185">Reference proteome</keyword>
<keyword id="KW-0804">Transcription</keyword>
<keyword id="KW-0805">Transcription regulation</keyword>
<sequence length="486" mass="50415">MFAAGLAPFYASNFSLWSAAYCSSAGPGGCSFPLDPAAVKKPSFCIADILHAGVGEPGATPEGLAGASAAALTAHLGSAHPHASFQAAARSPLRPTPVVAPSEVPAGFPQRLSPLSAAYHHHHPQQQQQQQQPQQQQPPPPPRAGALQPPASGSRVVPNPHQSGSAPAPSSKDLKFGIDRILSAEFDPKVKEGNTLRDLTSLLTGGRPAGVHLPGLQPSAGQFFASLDPINEASAILSPLSSNPRNSVQHQFQDTFPGPYAVLTKDTMPQTYKRKRSWSRAVFSNLQRKGLEKRFEIQKYVTKPDRKQLAAMLGLTDAQVKVWFQNRRMKWRHSKEAQAQKDKDKEAGEKPSGGAPAPDGEPEERSPSRSEGEAESESSDPESLDMAPSDTERTEGTERSLHQTTVIKASAAGALLAASSGGSGGSGGGGGGGFNFGGLSSGSTTSAGSSGSHSSGGASELLPAPQPSLSSAPKSPEPVPAPLGGL</sequence>
<gene>
    <name type="primary">HLX</name>
    <name type="synonym">HLX1</name>
</gene>
<accession>A7MB54</accession>
<reference evidence="6" key="1">
    <citation type="submission" date="2007-07" db="EMBL/GenBank/DDBJ databases">
        <authorList>
            <consortium name="NIH - Mammalian Gene Collection (MGC) project"/>
        </authorList>
    </citation>
    <scope>NUCLEOTIDE SEQUENCE [LARGE SCALE MRNA]</scope>
    <source>
        <strain evidence="6">Hereford</strain>
        <tissue evidence="6">Uterus</tissue>
    </source>
</reference>
<dbReference type="EMBL" id="BC151345">
    <property type="protein sequence ID" value="AAI51346.1"/>
    <property type="molecule type" value="mRNA"/>
</dbReference>
<dbReference type="RefSeq" id="NP_001094567.1">
    <property type="nucleotide sequence ID" value="NM_001101097.1"/>
</dbReference>
<dbReference type="SMR" id="A7MB54"/>
<dbReference type="FunCoup" id="A7MB54">
    <property type="interactions" value="309"/>
</dbReference>
<dbReference type="STRING" id="9913.ENSBTAP00000019352"/>
<dbReference type="PaxDb" id="9913-ENSBTAP00000019352"/>
<dbReference type="Ensembl" id="ENSBTAT00000019352.5">
    <property type="protein sequence ID" value="ENSBTAP00000019352.3"/>
    <property type="gene ID" value="ENSBTAG00000014560.5"/>
</dbReference>
<dbReference type="GeneID" id="519165"/>
<dbReference type="KEGG" id="bta:519165"/>
<dbReference type="CTD" id="3142"/>
<dbReference type="VEuPathDB" id="HostDB:ENSBTAG00000014560"/>
<dbReference type="VGNC" id="VGNC:50277">
    <property type="gene designation" value="HLX"/>
</dbReference>
<dbReference type="eggNOG" id="KOG0488">
    <property type="taxonomic scope" value="Eukaryota"/>
</dbReference>
<dbReference type="GeneTree" id="ENSGT00950000183093"/>
<dbReference type="HOGENOM" id="CLU_043671_1_0_1"/>
<dbReference type="InParanoid" id="A7MB54"/>
<dbReference type="OMA" id="VHHGGPF"/>
<dbReference type="OrthoDB" id="6159439at2759"/>
<dbReference type="TreeFam" id="TF350735"/>
<dbReference type="Proteomes" id="UP000009136">
    <property type="component" value="Chromosome 16"/>
</dbReference>
<dbReference type="Bgee" id="ENSBTAG00000014560">
    <property type="expression patterns" value="Expressed in laryngeal cartilage and 97 other cell types or tissues"/>
</dbReference>
<dbReference type="GO" id="GO:0005634">
    <property type="term" value="C:nucleus"/>
    <property type="evidence" value="ECO:0007669"/>
    <property type="project" value="UniProtKB-SubCell"/>
</dbReference>
<dbReference type="GO" id="GO:0000981">
    <property type="term" value="F:DNA-binding transcription factor activity, RNA polymerase II-specific"/>
    <property type="evidence" value="ECO:0007669"/>
    <property type="project" value="InterPro"/>
</dbReference>
<dbReference type="GO" id="GO:0043565">
    <property type="term" value="F:sequence-specific DNA binding"/>
    <property type="evidence" value="ECO:0000318"/>
    <property type="project" value="GO_Central"/>
</dbReference>
<dbReference type="GO" id="GO:0048557">
    <property type="term" value="P:embryonic digestive tract morphogenesis"/>
    <property type="evidence" value="ECO:0007669"/>
    <property type="project" value="Ensembl"/>
</dbReference>
<dbReference type="GO" id="GO:0048484">
    <property type="term" value="P:enteric nervous system development"/>
    <property type="evidence" value="ECO:0007669"/>
    <property type="project" value="Ensembl"/>
</dbReference>
<dbReference type="GO" id="GO:0050673">
    <property type="term" value="P:epithelial cell proliferation"/>
    <property type="evidence" value="ECO:0007669"/>
    <property type="project" value="Ensembl"/>
</dbReference>
<dbReference type="GO" id="GO:0001889">
    <property type="term" value="P:liver development"/>
    <property type="evidence" value="ECO:0007669"/>
    <property type="project" value="Ensembl"/>
</dbReference>
<dbReference type="GO" id="GO:0045629">
    <property type="term" value="P:negative regulation of T-helper 2 cell differentiation"/>
    <property type="evidence" value="ECO:0007669"/>
    <property type="project" value="Ensembl"/>
</dbReference>
<dbReference type="GO" id="GO:0035265">
    <property type="term" value="P:organ growth"/>
    <property type="evidence" value="ECO:0007669"/>
    <property type="project" value="Ensembl"/>
</dbReference>
<dbReference type="GO" id="GO:0050679">
    <property type="term" value="P:positive regulation of epithelial cell proliferation"/>
    <property type="evidence" value="ECO:0007669"/>
    <property type="project" value="Ensembl"/>
</dbReference>
<dbReference type="GO" id="GO:0046622">
    <property type="term" value="P:positive regulation of organ growth"/>
    <property type="evidence" value="ECO:0007669"/>
    <property type="project" value="Ensembl"/>
</dbReference>
<dbReference type="GO" id="GO:0045627">
    <property type="term" value="P:positive regulation of T-helper 1 cell differentiation"/>
    <property type="evidence" value="ECO:0007669"/>
    <property type="project" value="Ensembl"/>
</dbReference>
<dbReference type="GO" id="GO:0007519">
    <property type="term" value="P:skeletal muscle tissue development"/>
    <property type="evidence" value="ECO:0007669"/>
    <property type="project" value="Ensembl"/>
</dbReference>
<dbReference type="GO" id="GO:0045063">
    <property type="term" value="P:T-helper 1 cell differentiation"/>
    <property type="evidence" value="ECO:0007669"/>
    <property type="project" value="Ensembl"/>
</dbReference>
<dbReference type="GO" id="GO:0045064">
    <property type="term" value="P:T-helper 2 cell differentiation"/>
    <property type="evidence" value="ECO:0007669"/>
    <property type="project" value="Ensembl"/>
</dbReference>
<dbReference type="CDD" id="cd00086">
    <property type="entry name" value="homeodomain"/>
    <property type="match status" value="1"/>
</dbReference>
<dbReference type="FunFam" id="1.10.10.60:FF:000249">
    <property type="entry name" value="H2.0-like homeobox protein"/>
    <property type="match status" value="1"/>
</dbReference>
<dbReference type="Gene3D" id="1.10.10.60">
    <property type="entry name" value="Homeodomain-like"/>
    <property type="match status" value="1"/>
</dbReference>
<dbReference type="InterPro" id="IPR052497">
    <property type="entry name" value="H2.0_Homeobox_TF"/>
</dbReference>
<dbReference type="InterPro" id="IPR001356">
    <property type="entry name" value="HD"/>
</dbReference>
<dbReference type="InterPro" id="IPR020479">
    <property type="entry name" value="HD_metazoa"/>
</dbReference>
<dbReference type="InterPro" id="IPR017970">
    <property type="entry name" value="Homeobox_CS"/>
</dbReference>
<dbReference type="InterPro" id="IPR009057">
    <property type="entry name" value="Homeodomain-like_sf"/>
</dbReference>
<dbReference type="InterPro" id="IPR000047">
    <property type="entry name" value="HTH_motif"/>
</dbReference>
<dbReference type="PANTHER" id="PTHR46808">
    <property type="entry name" value="H2.0-LIKE HOMEOBOX PROTEIN"/>
    <property type="match status" value="1"/>
</dbReference>
<dbReference type="PANTHER" id="PTHR46808:SF1">
    <property type="entry name" value="H2.0-LIKE HOMEOBOX PROTEIN"/>
    <property type="match status" value="1"/>
</dbReference>
<dbReference type="Pfam" id="PF00046">
    <property type="entry name" value="Homeodomain"/>
    <property type="match status" value="1"/>
</dbReference>
<dbReference type="PRINTS" id="PR00024">
    <property type="entry name" value="HOMEOBOX"/>
</dbReference>
<dbReference type="PRINTS" id="PR00031">
    <property type="entry name" value="HTHREPRESSR"/>
</dbReference>
<dbReference type="SMART" id="SM00389">
    <property type="entry name" value="HOX"/>
    <property type="match status" value="1"/>
</dbReference>
<dbReference type="SUPFAM" id="SSF46689">
    <property type="entry name" value="Homeodomain-like"/>
    <property type="match status" value="1"/>
</dbReference>
<dbReference type="PROSITE" id="PS00027">
    <property type="entry name" value="HOMEOBOX_1"/>
    <property type="match status" value="1"/>
</dbReference>
<dbReference type="PROSITE" id="PS50071">
    <property type="entry name" value="HOMEOBOX_2"/>
    <property type="match status" value="1"/>
</dbReference>
<protein>
    <recommendedName>
        <fullName>H2.0-like homeobox protein</fullName>
    </recommendedName>
    <alternativeName>
        <fullName>Homeobox protein HLX1</fullName>
    </alternativeName>
</protein>